<protein>
    <recommendedName>
        <fullName evidence="1">UPF0260 protein GDI1595/Gdia_1801</fullName>
    </recommendedName>
</protein>
<evidence type="ECO:0000255" key="1">
    <source>
        <dbReference type="HAMAP-Rule" id="MF_00676"/>
    </source>
</evidence>
<proteinExistence type="inferred from homology"/>
<gene>
    <name type="ordered locus">GDI1595</name>
    <name type="ordered locus">Gdia_1801</name>
</gene>
<sequence length="160" mass="18221">MTDTPPFWQVRSLDEMTTEEWESLCDGCGRCCLHKLREDVTDQVLYTDVACRLLDLESCRCSDYAQRRRKVPDCVQLTPAALADIDWLPPSCAYRLLAEGQTLAWWHPLVSGSPDTVHEAGISVRGRAVSERRAGPLEHHIADWPGTMPRPRRPRIRRPA</sequence>
<feature type="chain" id="PRO_1000212523" description="UPF0260 protein GDI1595/Gdia_1801">
    <location>
        <begin position="1"/>
        <end position="160"/>
    </location>
</feature>
<accession>A9HGR3</accession>
<comment type="similarity">
    <text evidence="1">Belongs to the UPF0260 family.</text>
</comment>
<organism>
    <name type="scientific">Gluconacetobacter diazotrophicus (strain ATCC 49037 / DSM 5601 / CCUG 37298 / CIP 103539 / LMG 7603 / PAl5)</name>
    <dbReference type="NCBI Taxonomy" id="272568"/>
    <lineage>
        <taxon>Bacteria</taxon>
        <taxon>Pseudomonadati</taxon>
        <taxon>Pseudomonadota</taxon>
        <taxon>Alphaproteobacteria</taxon>
        <taxon>Acetobacterales</taxon>
        <taxon>Acetobacteraceae</taxon>
        <taxon>Gluconacetobacter</taxon>
    </lineage>
</organism>
<keyword id="KW-1185">Reference proteome</keyword>
<name>Y1595_GLUDA</name>
<reference key="1">
    <citation type="journal article" date="2009" name="BMC Genomics">
        <title>Complete genome sequence of the sugarcane nitrogen-fixing endophyte Gluconacetobacter diazotrophicus Pal5.</title>
        <authorList>
            <person name="Bertalan M."/>
            <person name="Albano R."/>
            <person name="de Padua V."/>
            <person name="Rouws L."/>
            <person name="Rojas C."/>
            <person name="Hemerly A."/>
            <person name="Teixeira K."/>
            <person name="Schwab S."/>
            <person name="Araujo J."/>
            <person name="Oliveira A."/>
            <person name="Franca L."/>
            <person name="Magalhaes V."/>
            <person name="Alqueres S."/>
            <person name="Cardoso A."/>
            <person name="Almeida W."/>
            <person name="Loureiro M.M."/>
            <person name="Nogueira E."/>
            <person name="Cidade D."/>
            <person name="Oliveira D."/>
            <person name="Simao T."/>
            <person name="Macedo J."/>
            <person name="Valadao A."/>
            <person name="Dreschsel M."/>
            <person name="Freitas F."/>
            <person name="Vidal M."/>
            <person name="Guedes H."/>
            <person name="Rodrigues E."/>
            <person name="Meneses C."/>
            <person name="Brioso P."/>
            <person name="Pozzer L."/>
            <person name="Figueiredo D."/>
            <person name="Montano H."/>
            <person name="Junior J."/>
            <person name="de Souza Filho G."/>
            <person name="Martin Quintana Flores V."/>
            <person name="Ferreira B."/>
            <person name="Branco A."/>
            <person name="Gonzalez P."/>
            <person name="Guillobel H."/>
            <person name="Lemos M."/>
            <person name="Seibel L."/>
            <person name="Macedo J."/>
            <person name="Alves-Ferreira M."/>
            <person name="Sachetto-Martins G."/>
            <person name="Coelho A."/>
            <person name="Santos E."/>
            <person name="Amaral G."/>
            <person name="Neves A."/>
            <person name="Pacheco A.B."/>
            <person name="Carvalho D."/>
            <person name="Lery L."/>
            <person name="Bisch P."/>
            <person name="Rossle S.C."/>
            <person name="Urmenyi T."/>
            <person name="Rael Pereira A."/>
            <person name="Silva R."/>
            <person name="Rondinelli E."/>
            <person name="von Kruger W."/>
            <person name="Martins O."/>
            <person name="Baldani J.I."/>
            <person name="Ferreira P.C."/>
        </authorList>
    </citation>
    <scope>NUCLEOTIDE SEQUENCE [LARGE SCALE GENOMIC DNA]</scope>
    <source>
        <strain>ATCC 49037 / DSM 5601 / CCUG 37298 / CIP 103539 / LMG 7603 / PAl5</strain>
    </source>
</reference>
<reference key="2">
    <citation type="journal article" date="2010" name="Stand. Genomic Sci.">
        <title>Two genome sequences of the same bacterial strain, Gluconacetobacter diazotrophicus PAl 5, suggest a new standard in genome sequence submission.</title>
        <authorList>
            <person name="Giongo A."/>
            <person name="Tyler H.L."/>
            <person name="Zipperer U.N."/>
            <person name="Triplett E.W."/>
        </authorList>
    </citation>
    <scope>NUCLEOTIDE SEQUENCE [LARGE SCALE GENOMIC DNA]</scope>
    <source>
        <strain>ATCC 49037 / DSM 5601 / CCUG 37298 / CIP 103539 / LMG 7603 / PAl5</strain>
    </source>
</reference>
<dbReference type="EMBL" id="CP001189">
    <property type="protein sequence ID" value="ACI51561.1"/>
    <property type="molecule type" value="Genomic_DNA"/>
</dbReference>
<dbReference type="EMBL" id="AM889285">
    <property type="protein sequence ID" value="CAP55538.1"/>
    <property type="molecule type" value="Genomic_DNA"/>
</dbReference>
<dbReference type="RefSeq" id="WP_012224991.1">
    <property type="nucleotide sequence ID" value="NC_010125.1"/>
</dbReference>
<dbReference type="STRING" id="272568.GDI1595"/>
<dbReference type="KEGG" id="gdi:GDI1595"/>
<dbReference type="KEGG" id="gdj:Gdia_1801"/>
<dbReference type="eggNOG" id="COG2983">
    <property type="taxonomic scope" value="Bacteria"/>
</dbReference>
<dbReference type="HOGENOM" id="CLU_109769_0_1_5"/>
<dbReference type="OrthoDB" id="9786855at2"/>
<dbReference type="Proteomes" id="UP000001176">
    <property type="component" value="Chromosome"/>
</dbReference>
<dbReference type="HAMAP" id="MF_00676">
    <property type="entry name" value="UPF0260"/>
    <property type="match status" value="1"/>
</dbReference>
<dbReference type="InterPro" id="IPR005358">
    <property type="entry name" value="Puta_zinc/iron-chelating_dom"/>
</dbReference>
<dbReference type="InterPro" id="IPR008228">
    <property type="entry name" value="UCP006173"/>
</dbReference>
<dbReference type="NCBIfam" id="NF003501">
    <property type="entry name" value="PRK05170.1-5"/>
    <property type="match status" value="1"/>
</dbReference>
<dbReference type="NCBIfam" id="NF003507">
    <property type="entry name" value="PRK05170.2-5"/>
    <property type="match status" value="1"/>
</dbReference>
<dbReference type="PANTHER" id="PTHR37421">
    <property type="entry name" value="UPF0260 PROTEIN YCGN"/>
    <property type="match status" value="1"/>
</dbReference>
<dbReference type="PANTHER" id="PTHR37421:SF1">
    <property type="entry name" value="UPF0260 PROTEIN YCGN"/>
    <property type="match status" value="1"/>
</dbReference>
<dbReference type="Pfam" id="PF03692">
    <property type="entry name" value="CxxCxxCC"/>
    <property type="match status" value="1"/>
</dbReference>
<dbReference type="PIRSF" id="PIRSF006173">
    <property type="entry name" value="UCP006173"/>
    <property type="match status" value="1"/>
</dbReference>